<name>MATK_TORCL</name>
<keyword id="KW-0150">Chloroplast</keyword>
<keyword id="KW-0507">mRNA processing</keyword>
<keyword id="KW-0934">Plastid</keyword>
<keyword id="KW-0694">RNA-binding</keyword>
<keyword id="KW-0819">tRNA processing</keyword>
<geneLocation type="chloroplast"/>
<feature type="chain" id="PRO_0000143740" description="Maturase K">
    <location>
        <begin position="1"/>
        <end position="495"/>
    </location>
</feature>
<accession>Q9MVV7</accession>
<dbReference type="EMBL" id="AB023998">
    <property type="protein sequence ID" value="BAA86047.1"/>
    <property type="molecule type" value="Genomic_DNA"/>
</dbReference>
<dbReference type="GO" id="GO:0009507">
    <property type="term" value="C:chloroplast"/>
    <property type="evidence" value="ECO:0007669"/>
    <property type="project" value="UniProtKB-SubCell"/>
</dbReference>
<dbReference type="GO" id="GO:0003723">
    <property type="term" value="F:RNA binding"/>
    <property type="evidence" value="ECO:0007669"/>
    <property type="project" value="UniProtKB-KW"/>
</dbReference>
<dbReference type="GO" id="GO:0006397">
    <property type="term" value="P:mRNA processing"/>
    <property type="evidence" value="ECO:0007669"/>
    <property type="project" value="UniProtKB-KW"/>
</dbReference>
<dbReference type="GO" id="GO:0008380">
    <property type="term" value="P:RNA splicing"/>
    <property type="evidence" value="ECO:0007669"/>
    <property type="project" value="UniProtKB-UniRule"/>
</dbReference>
<dbReference type="GO" id="GO:0008033">
    <property type="term" value="P:tRNA processing"/>
    <property type="evidence" value="ECO:0007669"/>
    <property type="project" value="UniProtKB-KW"/>
</dbReference>
<dbReference type="HAMAP" id="MF_01390">
    <property type="entry name" value="MatK"/>
    <property type="match status" value="1"/>
</dbReference>
<dbReference type="InterPro" id="IPR024937">
    <property type="entry name" value="Domain_X"/>
</dbReference>
<dbReference type="InterPro" id="IPR002866">
    <property type="entry name" value="Maturase_MatK"/>
</dbReference>
<dbReference type="InterPro" id="IPR024942">
    <property type="entry name" value="Maturase_MatK_N"/>
</dbReference>
<dbReference type="PANTHER" id="PTHR34811">
    <property type="entry name" value="MATURASE K"/>
    <property type="match status" value="1"/>
</dbReference>
<dbReference type="PANTHER" id="PTHR34811:SF1">
    <property type="entry name" value="MATURASE K"/>
    <property type="match status" value="1"/>
</dbReference>
<dbReference type="Pfam" id="PF01348">
    <property type="entry name" value="Intron_maturas2"/>
    <property type="match status" value="1"/>
</dbReference>
<dbReference type="Pfam" id="PF01824">
    <property type="entry name" value="MatK_N"/>
    <property type="match status" value="1"/>
</dbReference>
<proteinExistence type="inferred from homology"/>
<protein>
    <recommendedName>
        <fullName evidence="1">Maturase K</fullName>
    </recommendedName>
    <alternativeName>
        <fullName evidence="1">Intron maturase</fullName>
    </alternativeName>
</protein>
<sequence>MDEFQRDGTNHRSWQQFFLYPLFFREDLYAIAHDHHLDRSSSSEPIEILISNYFSFLTVKRLIRRIRQQNDSIGLFGNCDPIQFIDRNRNSYSEPVLEALTVILEVSFAMRSKHFAETMSGWKSIRSIHCIFPLIEDKFPHSNYISDIRVPYSIHPEILVRTFRRWIRDTPSLHLLRFILHEWRNSFSAENLQKALVVPRENMRLSLFLWNSYVYECESFLVPLLKRFYRSRSLLYGSFPNRTHFDRKIKHIVIFPINISTKRIWLLKDSFIHYVRYGERSLIALKGTHLQVKKCRYHLFHFWQYYFHLWSQPYRICILELSKNDSFFLGYFLSFKIKPLVVRTKMLDDLFITDLVTNELNPISPIRSILLFLAKEKFCDISGHPISKLSWTSLTDDDILDRFDRICINLFHYYSGSINKDGLYYIKYILLLPCAKTLACKHKSTIRVVREESGSELFTKSFFKEQEFISSSFSKTRSQRERFWNSDIIQIKCPI</sequence>
<organism>
    <name type="scientific">Torreya californica</name>
    <name type="common">California nutmeg</name>
    <dbReference type="NCBI Taxonomy" id="89482"/>
    <lineage>
        <taxon>Eukaryota</taxon>
        <taxon>Viridiplantae</taxon>
        <taxon>Streptophyta</taxon>
        <taxon>Embryophyta</taxon>
        <taxon>Tracheophyta</taxon>
        <taxon>Spermatophyta</taxon>
        <taxon>Pinopsida</taxon>
        <taxon>Pinidae</taxon>
        <taxon>Conifers II</taxon>
        <taxon>Cupressales</taxon>
        <taxon>Taxaceae</taxon>
        <taxon>Torreya</taxon>
    </lineage>
</organism>
<gene>
    <name evidence="1" type="primary">matK</name>
</gene>
<reference key="1">
    <citation type="journal article" date="2000" name="Mol. Phylogenet. Evol.">
        <title>Phylogeny of taxaceae and Cephalotaxaceae genera inferred from chloroplast matK gene and nuclear rDNA ITS region.</title>
        <authorList>
            <person name="Cheng Y."/>
            <person name="Nicolson R.G."/>
            <person name="Tripp K."/>
            <person name="Chaw S."/>
        </authorList>
    </citation>
    <scope>NUCLEOTIDE SEQUENCE [GENOMIC DNA]</scope>
    <source>
        <tissue>Leaf</tissue>
    </source>
</reference>
<comment type="function">
    <text evidence="1">Usually encoded in the trnK tRNA gene intron. Probably assists in splicing its own and other chloroplast group II introns.</text>
</comment>
<comment type="subcellular location">
    <subcellularLocation>
        <location>Plastid</location>
        <location>Chloroplast</location>
    </subcellularLocation>
</comment>
<comment type="similarity">
    <text evidence="1">Belongs to the intron maturase 2 family. MatK subfamily.</text>
</comment>
<evidence type="ECO:0000255" key="1">
    <source>
        <dbReference type="HAMAP-Rule" id="MF_01390"/>
    </source>
</evidence>